<accession>A6TVF6</accession>
<organism>
    <name type="scientific">Alkaliphilus metalliredigens (strain QYMF)</name>
    <dbReference type="NCBI Taxonomy" id="293826"/>
    <lineage>
        <taxon>Bacteria</taxon>
        <taxon>Bacillati</taxon>
        <taxon>Bacillota</taxon>
        <taxon>Clostridia</taxon>
        <taxon>Peptostreptococcales</taxon>
        <taxon>Natronincolaceae</taxon>
        <taxon>Alkaliphilus</taxon>
    </lineage>
</organism>
<dbReference type="EC" id="1.3.1.98" evidence="1"/>
<dbReference type="EMBL" id="CP000724">
    <property type="protein sequence ID" value="ABR50174.1"/>
    <property type="molecule type" value="Genomic_DNA"/>
</dbReference>
<dbReference type="RefSeq" id="WP_012065122.1">
    <property type="nucleotide sequence ID" value="NC_009633.1"/>
</dbReference>
<dbReference type="SMR" id="A6TVF6"/>
<dbReference type="STRING" id="293826.Amet_4093"/>
<dbReference type="KEGG" id="amt:Amet_4093"/>
<dbReference type="eggNOG" id="COG0812">
    <property type="taxonomic scope" value="Bacteria"/>
</dbReference>
<dbReference type="HOGENOM" id="CLU_035304_1_1_9"/>
<dbReference type="OrthoDB" id="9804753at2"/>
<dbReference type="UniPathway" id="UPA00219"/>
<dbReference type="Proteomes" id="UP000001572">
    <property type="component" value="Chromosome"/>
</dbReference>
<dbReference type="GO" id="GO:0005829">
    <property type="term" value="C:cytosol"/>
    <property type="evidence" value="ECO:0007669"/>
    <property type="project" value="TreeGrafter"/>
</dbReference>
<dbReference type="GO" id="GO:0071949">
    <property type="term" value="F:FAD binding"/>
    <property type="evidence" value="ECO:0007669"/>
    <property type="project" value="InterPro"/>
</dbReference>
<dbReference type="GO" id="GO:0008762">
    <property type="term" value="F:UDP-N-acetylmuramate dehydrogenase activity"/>
    <property type="evidence" value="ECO:0007669"/>
    <property type="project" value="UniProtKB-UniRule"/>
</dbReference>
<dbReference type="GO" id="GO:0051301">
    <property type="term" value="P:cell division"/>
    <property type="evidence" value="ECO:0007669"/>
    <property type="project" value="UniProtKB-KW"/>
</dbReference>
<dbReference type="GO" id="GO:0071555">
    <property type="term" value="P:cell wall organization"/>
    <property type="evidence" value="ECO:0007669"/>
    <property type="project" value="UniProtKB-KW"/>
</dbReference>
<dbReference type="GO" id="GO:0009252">
    <property type="term" value="P:peptidoglycan biosynthetic process"/>
    <property type="evidence" value="ECO:0007669"/>
    <property type="project" value="UniProtKB-UniRule"/>
</dbReference>
<dbReference type="GO" id="GO:0008360">
    <property type="term" value="P:regulation of cell shape"/>
    <property type="evidence" value="ECO:0007669"/>
    <property type="project" value="UniProtKB-KW"/>
</dbReference>
<dbReference type="Gene3D" id="3.30.465.10">
    <property type="match status" value="1"/>
</dbReference>
<dbReference type="Gene3D" id="3.90.78.10">
    <property type="entry name" value="UDP-N-acetylenolpyruvoylglucosamine reductase, C-terminal domain"/>
    <property type="match status" value="1"/>
</dbReference>
<dbReference type="Gene3D" id="3.30.43.10">
    <property type="entry name" value="Uridine Diphospho-n-acetylenolpyruvylglucosamine Reductase, domain 2"/>
    <property type="match status" value="1"/>
</dbReference>
<dbReference type="HAMAP" id="MF_00037">
    <property type="entry name" value="MurB"/>
    <property type="match status" value="1"/>
</dbReference>
<dbReference type="InterPro" id="IPR016166">
    <property type="entry name" value="FAD-bd_PCMH"/>
</dbReference>
<dbReference type="InterPro" id="IPR036318">
    <property type="entry name" value="FAD-bd_PCMH-like_sf"/>
</dbReference>
<dbReference type="InterPro" id="IPR016167">
    <property type="entry name" value="FAD-bd_PCMH_sub1"/>
</dbReference>
<dbReference type="InterPro" id="IPR016169">
    <property type="entry name" value="FAD-bd_PCMH_sub2"/>
</dbReference>
<dbReference type="InterPro" id="IPR003170">
    <property type="entry name" value="MurB"/>
</dbReference>
<dbReference type="InterPro" id="IPR011601">
    <property type="entry name" value="MurB_C"/>
</dbReference>
<dbReference type="InterPro" id="IPR036635">
    <property type="entry name" value="MurB_C_sf"/>
</dbReference>
<dbReference type="InterPro" id="IPR006094">
    <property type="entry name" value="Oxid_FAD_bind_N"/>
</dbReference>
<dbReference type="NCBIfam" id="TIGR00179">
    <property type="entry name" value="murB"/>
    <property type="match status" value="1"/>
</dbReference>
<dbReference type="NCBIfam" id="NF010480">
    <property type="entry name" value="PRK13905.1"/>
    <property type="match status" value="1"/>
</dbReference>
<dbReference type="PANTHER" id="PTHR21071">
    <property type="entry name" value="UDP-N-ACETYLENOLPYRUVOYLGLUCOSAMINE REDUCTASE"/>
    <property type="match status" value="1"/>
</dbReference>
<dbReference type="PANTHER" id="PTHR21071:SF4">
    <property type="entry name" value="UDP-N-ACETYLENOLPYRUVOYLGLUCOSAMINE REDUCTASE"/>
    <property type="match status" value="1"/>
</dbReference>
<dbReference type="Pfam" id="PF01565">
    <property type="entry name" value="FAD_binding_4"/>
    <property type="match status" value="1"/>
</dbReference>
<dbReference type="Pfam" id="PF02873">
    <property type="entry name" value="MurB_C"/>
    <property type="match status" value="1"/>
</dbReference>
<dbReference type="SUPFAM" id="SSF56176">
    <property type="entry name" value="FAD-binding/transporter-associated domain-like"/>
    <property type="match status" value="1"/>
</dbReference>
<dbReference type="SUPFAM" id="SSF56194">
    <property type="entry name" value="Uridine diphospho-N-Acetylenolpyruvylglucosamine reductase, MurB, C-terminal domain"/>
    <property type="match status" value="1"/>
</dbReference>
<dbReference type="PROSITE" id="PS51387">
    <property type="entry name" value="FAD_PCMH"/>
    <property type="match status" value="1"/>
</dbReference>
<evidence type="ECO:0000255" key="1">
    <source>
        <dbReference type="HAMAP-Rule" id="MF_00037"/>
    </source>
</evidence>
<comment type="function">
    <text evidence="1">Cell wall formation.</text>
</comment>
<comment type="catalytic activity">
    <reaction evidence="1">
        <text>UDP-N-acetyl-alpha-D-muramate + NADP(+) = UDP-N-acetyl-3-O-(1-carboxyvinyl)-alpha-D-glucosamine + NADPH + H(+)</text>
        <dbReference type="Rhea" id="RHEA:12248"/>
        <dbReference type="ChEBI" id="CHEBI:15378"/>
        <dbReference type="ChEBI" id="CHEBI:57783"/>
        <dbReference type="ChEBI" id="CHEBI:58349"/>
        <dbReference type="ChEBI" id="CHEBI:68483"/>
        <dbReference type="ChEBI" id="CHEBI:70757"/>
        <dbReference type="EC" id="1.3.1.98"/>
    </reaction>
</comment>
<comment type="cofactor">
    <cofactor evidence="1">
        <name>FAD</name>
        <dbReference type="ChEBI" id="CHEBI:57692"/>
    </cofactor>
</comment>
<comment type="pathway">
    <text evidence="1">Cell wall biogenesis; peptidoglycan biosynthesis.</text>
</comment>
<comment type="subcellular location">
    <subcellularLocation>
        <location evidence="1">Cytoplasm</location>
    </subcellularLocation>
</comment>
<comment type="similarity">
    <text evidence="1">Belongs to the MurB family.</text>
</comment>
<gene>
    <name evidence="1" type="primary">murB</name>
    <name type="ordered locus">Amet_4093</name>
</gene>
<feature type="chain" id="PRO_1000057271" description="UDP-N-acetylenolpyruvoylglucosamine reductase">
    <location>
        <begin position="1"/>
        <end position="304"/>
    </location>
</feature>
<feature type="domain" description="FAD-binding PCMH-type" evidence="1">
    <location>
        <begin position="33"/>
        <end position="198"/>
    </location>
</feature>
<feature type="active site" evidence="1">
    <location>
        <position position="177"/>
    </location>
</feature>
<feature type="active site" description="Proton donor" evidence="1">
    <location>
        <position position="227"/>
    </location>
</feature>
<feature type="active site" evidence="1">
    <location>
        <position position="297"/>
    </location>
</feature>
<proteinExistence type="inferred from homology"/>
<protein>
    <recommendedName>
        <fullName evidence="1">UDP-N-acetylenolpyruvoylglucosamine reductase</fullName>
        <ecNumber evidence="1">1.3.1.98</ecNumber>
    </recommendedName>
    <alternativeName>
        <fullName evidence="1">UDP-N-acetylmuramate dehydrogenase</fullName>
    </alternativeName>
</protein>
<reference key="1">
    <citation type="journal article" date="2016" name="Genome Announc.">
        <title>Complete genome sequence of Alkaliphilus metalliredigens strain QYMF, an alkaliphilic and metal-reducing bacterium isolated from borax-contaminated leachate ponds.</title>
        <authorList>
            <person name="Hwang C."/>
            <person name="Copeland A."/>
            <person name="Lucas S."/>
            <person name="Lapidus A."/>
            <person name="Barry K."/>
            <person name="Detter J.C."/>
            <person name="Glavina Del Rio T."/>
            <person name="Hammon N."/>
            <person name="Israni S."/>
            <person name="Dalin E."/>
            <person name="Tice H."/>
            <person name="Pitluck S."/>
            <person name="Chertkov O."/>
            <person name="Brettin T."/>
            <person name="Bruce D."/>
            <person name="Han C."/>
            <person name="Schmutz J."/>
            <person name="Larimer F."/>
            <person name="Land M.L."/>
            <person name="Hauser L."/>
            <person name="Kyrpides N."/>
            <person name="Mikhailova N."/>
            <person name="Ye Q."/>
            <person name="Zhou J."/>
            <person name="Richardson P."/>
            <person name="Fields M.W."/>
        </authorList>
    </citation>
    <scope>NUCLEOTIDE SEQUENCE [LARGE SCALE GENOMIC DNA]</scope>
    <source>
        <strain>QYMF</strain>
    </source>
</reference>
<keyword id="KW-0131">Cell cycle</keyword>
<keyword id="KW-0132">Cell division</keyword>
<keyword id="KW-0133">Cell shape</keyword>
<keyword id="KW-0961">Cell wall biogenesis/degradation</keyword>
<keyword id="KW-0963">Cytoplasm</keyword>
<keyword id="KW-0274">FAD</keyword>
<keyword id="KW-0285">Flavoprotein</keyword>
<keyword id="KW-0521">NADP</keyword>
<keyword id="KW-0560">Oxidoreductase</keyword>
<keyword id="KW-0573">Peptidoglycan synthesis</keyword>
<keyword id="KW-1185">Reference proteome</keyword>
<name>MURB_ALKMQ</name>
<sequence>MDKENLYQEFVALMGEEHVFLEEPMKKHTSFKIGGPADLLVMPRTVEEIRQSVEICKKSKTPYFVMGNGSNLLVRDKGMRCVVIKIAENFNEVRFEGNHVIVQTGILLSTLSNQIARACLKGFEFANGIPGTVGGAITMNAGAYGGEMKDVVKSCKVLNHQGEIIDLSLEELELDYRTSIIQEKGYIALEVVLALQEGKYEEIRSIIDDLTVKRTTKQPLHLPCAGSVFKRPPGYFAGKLIQDCNLKGFKIGGAQVSELHSGFIVNIDNASAADVLNLIAHIQKQVKEKFDVGLHNEVRVVGEV</sequence>